<accession>Q6D7E7</accession>
<proteinExistence type="inferred from homology"/>
<sequence length="353" mass="38577">MNILFDSNETIYPFPPKPRPLSVDAKQHYRSRIKTLLRERNAVMVAHYYTDPEIQALAEETGGCVADSLEMARFGSTHSASTLLVAGVRFMGETAKILNPEKTILMPTLEAECSLDLGCPIDAFSRFCDAHPDRTVVVYANTSAAVKARADWVVTSSIAVELIEHLDSLGEKIIWAPDRHLGSYVQKQTGADVLCWQGACIVHDEFKTQALQRMKILYPDAAILVHPESPQSVVEMADAVGSTSQLIQAAKTLPQRELIVATDRGIFYKMQQACPEKTLLEAPTAGEGATCRSCAHCPWMAMNGLEAIANGLEQGGHAHEIHVDAALREGALIPLNRMLDFAASLKLRVKGNA</sequence>
<comment type="function">
    <text evidence="1">Catalyzes the condensation of iminoaspartate with dihydroxyacetone phosphate to form quinolinate.</text>
</comment>
<comment type="catalytic activity">
    <reaction evidence="1">
        <text>iminosuccinate + dihydroxyacetone phosphate = quinolinate + phosphate + 2 H2O + H(+)</text>
        <dbReference type="Rhea" id="RHEA:25888"/>
        <dbReference type="ChEBI" id="CHEBI:15377"/>
        <dbReference type="ChEBI" id="CHEBI:15378"/>
        <dbReference type="ChEBI" id="CHEBI:29959"/>
        <dbReference type="ChEBI" id="CHEBI:43474"/>
        <dbReference type="ChEBI" id="CHEBI:57642"/>
        <dbReference type="ChEBI" id="CHEBI:77875"/>
        <dbReference type="EC" id="2.5.1.72"/>
    </reaction>
    <physiologicalReaction direction="left-to-right" evidence="1">
        <dbReference type="Rhea" id="RHEA:25889"/>
    </physiologicalReaction>
</comment>
<comment type="cofactor">
    <cofactor evidence="1">
        <name>[4Fe-4S] cluster</name>
        <dbReference type="ChEBI" id="CHEBI:49883"/>
    </cofactor>
    <text evidence="1">Binds 1 [4Fe-4S] cluster per subunit.</text>
</comment>
<comment type="pathway">
    <text evidence="1">Cofactor biosynthesis; NAD(+) biosynthesis; quinolinate from iminoaspartate: step 1/1.</text>
</comment>
<comment type="subcellular location">
    <subcellularLocation>
        <location evidence="1">Cytoplasm</location>
    </subcellularLocation>
</comment>
<comment type="similarity">
    <text evidence="1">Belongs to the quinolinate synthase family. Type 1 subfamily.</text>
</comment>
<organism>
    <name type="scientific">Pectobacterium atrosepticum (strain SCRI 1043 / ATCC BAA-672)</name>
    <name type="common">Erwinia carotovora subsp. atroseptica</name>
    <dbReference type="NCBI Taxonomy" id="218491"/>
    <lineage>
        <taxon>Bacteria</taxon>
        <taxon>Pseudomonadati</taxon>
        <taxon>Pseudomonadota</taxon>
        <taxon>Gammaproteobacteria</taxon>
        <taxon>Enterobacterales</taxon>
        <taxon>Pectobacteriaceae</taxon>
        <taxon>Pectobacterium</taxon>
    </lineage>
</organism>
<feature type="chain" id="PRO_1000024956" description="Quinolinate synthase">
    <location>
        <begin position="1"/>
        <end position="353"/>
    </location>
</feature>
<feature type="binding site" evidence="1">
    <location>
        <position position="47"/>
    </location>
    <ligand>
        <name>iminosuccinate</name>
        <dbReference type="ChEBI" id="CHEBI:77875"/>
    </ligand>
</feature>
<feature type="binding site" evidence="1">
    <location>
        <position position="68"/>
    </location>
    <ligand>
        <name>iminosuccinate</name>
        <dbReference type="ChEBI" id="CHEBI:77875"/>
    </ligand>
</feature>
<feature type="binding site" evidence="1">
    <location>
        <position position="113"/>
    </location>
    <ligand>
        <name>[4Fe-4S] cluster</name>
        <dbReference type="ChEBI" id="CHEBI:49883"/>
    </ligand>
</feature>
<feature type="binding site" evidence="1">
    <location>
        <begin position="139"/>
        <end position="141"/>
    </location>
    <ligand>
        <name>iminosuccinate</name>
        <dbReference type="ChEBI" id="CHEBI:77875"/>
    </ligand>
</feature>
<feature type="binding site" evidence="1">
    <location>
        <position position="156"/>
    </location>
    <ligand>
        <name>iminosuccinate</name>
        <dbReference type="ChEBI" id="CHEBI:77875"/>
    </ligand>
</feature>
<feature type="binding site" evidence="1">
    <location>
        <position position="200"/>
    </location>
    <ligand>
        <name>[4Fe-4S] cluster</name>
        <dbReference type="ChEBI" id="CHEBI:49883"/>
    </ligand>
</feature>
<feature type="binding site" evidence="1">
    <location>
        <begin position="226"/>
        <end position="228"/>
    </location>
    <ligand>
        <name>iminosuccinate</name>
        <dbReference type="ChEBI" id="CHEBI:77875"/>
    </ligand>
</feature>
<feature type="binding site" evidence="1">
    <location>
        <position position="243"/>
    </location>
    <ligand>
        <name>iminosuccinate</name>
        <dbReference type="ChEBI" id="CHEBI:77875"/>
    </ligand>
</feature>
<feature type="binding site" evidence="1">
    <location>
        <position position="297"/>
    </location>
    <ligand>
        <name>[4Fe-4S] cluster</name>
        <dbReference type="ChEBI" id="CHEBI:49883"/>
    </ligand>
</feature>
<evidence type="ECO:0000255" key="1">
    <source>
        <dbReference type="HAMAP-Rule" id="MF_00567"/>
    </source>
</evidence>
<name>NADA_PECAS</name>
<gene>
    <name evidence="1" type="primary">nadA</name>
    <name type="ordered locus">ECA1378</name>
</gene>
<dbReference type="EC" id="2.5.1.72" evidence="1"/>
<dbReference type="EMBL" id="BX950851">
    <property type="protein sequence ID" value="CAG74288.1"/>
    <property type="molecule type" value="Genomic_DNA"/>
</dbReference>
<dbReference type="RefSeq" id="WP_011092963.1">
    <property type="nucleotide sequence ID" value="NC_004547.2"/>
</dbReference>
<dbReference type="SMR" id="Q6D7E7"/>
<dbReference type="STRING" id="218491.ECA1378"/>
<dbReference type="GeneID" id="57208193"/>
<dbReference type="KEGG" id="eca:ECA1378"/>
<dbReference type="PATRIC" id="fig|218491.5.peg.1412"/>
<dbReference type="eggNOG" id="COG0379">
    <property type="taxonomic scope" value="Bacteria"/>
</dbReference>
<dbReference type="HOGENOM" id="CLU_047382_1_0_6"/>
<dbReference type="OrthoDB" id="9801204at2"/>
<dbReference type="UniPathway" id="UPA00253">
    <property type="reaction ID" value="UER00327"/>
</dbReference>
<dbReference type="Proteomes" id="UP000007966">
    <property type="component" value="Chromosome"/>
</dbReference>
<dbReference type="GO" id="GO:0005829">
    <property type="term" value="C:cytosol"/>
    <property type="evidence" value="ECO:0007669"/>
    <property type="project" value="TreeGrafter"/>
</dbReference>
<dbReference type="GO" id="GO:0051539">
    <property type="term" value="F:4 iron, 4 sulfur cluster binding"/>
    <property type="evidence" value="ECO:0007669"/>
    <property type="project" value="UniProtKB-KW"/>
</dbReference>
<dbReference type="GO" id="GO:0046872">
    <property type="term" value="F:metal ion binding"/>
    <property type="evidence" value="ECO:0007669"/>
    <property type="project" value="UniProtKB-KW"/>
</dbReference>
<dbReference type="GO" id="GO:0008987">
    <property type="term" value="F:quinolinate synthetase A activity"/>
    <property type="evidence" value="ECO:0007669"/>
    <property type="project" value="UniProtKB-UniRule"/>
</dbReference>
<dbReference type="GO" id="GO:0034628">
    <property type="term" value="P:'de novo' NAD biosynthetic process from L-aspartate"/>
    <property type="evidence" value="ECO:0007669"/>
    <property type="project" value="TreeGrafter"/>
</dbReference>
<dbReference type="FunFam" id="3.40.50.10800:FF:000003">
    <property type="entry name" value="Quinolinate synthase A"/>
    <property type="match status" value="1"/>
</dbReference>
<dbReference type="Gene3D" id="3.40.50.10800">
    <property type="entry name" value="NadA-like"/>
    <property type="match status" value="3"/>
</dbReference>
<dbReference type="HAMAP" id="MF_00567">
    <property type="entry name" value="NadA_type1"/>
    <property type="match status" value="1"/>
</dbReference>
<dbReference type="InterPro" id="IPR003473">
    <property type="entry name" value="NadA"/>
</dbReference>
<dbReference type="InterPro" id="IPR036094">
    <property type="entry name" value="NadA_sf"/>
</dbReference>
<dbReference type="InterPro" id="IPR023513">
    <property type="entry name" value="Quinolinate_synth_A_type1"/>
</dbReference>
<dbReference type="NCBIfam" id="TIGR00550">
    <property type="entry name" value="nadA"/>
    <property type="match status" value="1"/>
</dbReference>
<dbReference type="NCBIfam" id="NF006877">
    <property type="entry name" value="PRK09375.1-1"/>
    <property type="match status" value="1"/>
</dbReference>
<dbReference type="NCBIfam" id="NF006878">
    <property type="entry name" value="PRK09375.1-2"/>
    <property type="match status" value="1"/>
</dbReference>
<dbReference type="PANTHER" id="PTHR30573:SF0">
    <property type="entry name" value="QUINOLINATE SYNTHASE, CHLOROPLASTIC"/>
    <property type="match status" value="1"/>
</dbReference>
<dbReference type="PANTHER" id="PTHR30573">
    <property type="entry name" value="QUINOLINATE SYNTHETASE A"/>
    <property type="match status" value="1"/>
</dbReference>
<dbReference type="Pfam" id="PF02445">
    <property type="entry name" value="NadA"/>
    <property type="match status" value="1"/>
</dbReference>
<dbReference type="SUPFAM" id="SSF142754">
    <property type="entry name" value="NadA-like"/>
    <property type="match status" value="1"/>
</dbReference>
<keyword id="KW-0004">4Fe-4S</keyword>
<keyword id="KW-0963">Cytoplasm</keyword>
<keyword id="KW-0408">Iron</keyword>
<keyword id="KW-0411">Iron-sulfur</keyword>
<keyword id="KW-0479">Metal-binding</keyword>
<keyword id="KW-0662">Pyridine nucleotide biosynthesis</keyword>
<keyword id="KW-1185">Reference proteome</keyword>
<keyword id="KW-0808">Transferase</keyword>
<protein>
    <recommendedName>
        <fullName evidence="1">Quinolinate synthase</fullName>
        <ecNumber evidence="1">2.5.1.72</ecNumber>
    </recommendedName>
</protein>
<reference key="1">
    <citation type="journal article" date="2004" name="Proc. Natl. Acad. Sci. U.S.A.">
        <title>Genome sequence of the enterobacterial phytopathogen Erwinia carotovora subsp. atroseptica and characterization of virulence factors.</title>
        <authorList>
            <person name="Bell K.S."/>
            <person name="Sebaihia M."/>
            <person name="Pritchard L."/>
            <person name="Holden M.T.G."/>
            <person name="Hyman L.J."/>
            <person name="Holeva M.C."/>
            <person name="Thomson N.R."/>
            <person name="Bentley S.D."/>
            <person name="Churcher L.J.C."/>
            <person name="Mungall K."/>
            <person name="Atkin R."/>
            <person name="Bason N."/>
            <person name="Brooks K."/>
            <person name="Chillingworth T."/>
            <person name="Clark K."/>
            <person name="Doggett J."/>
            <person name="Fraser A."/>
            <person name="Hance Z."/>
            <person name="Hauser H."/>
            <person name="Jagels K."/>
            <person name="Moule S."/>
            <person name="Norbertczak H."/>
            <person name="Ormond D."/>
            <person name="Price C."/>
            <person name="Quail M.A."/>
            <person name="Sanders M."/>
            <person name="Walker D."/>
            <person name="Whitehead S."/>
            <person name="Salmond G.P.C."/>
            <person name="Birch P.R.J."/>
            <person name="Parkhill J."/>
            <person name="Toth I.K."/>
        </authorList>
    </citation>
    <scope>NUCLEOTIDE SEQUENCE [LARGE SCALE GENOMIC DNA]</scope>
    <source>
        <strain>SCRI 1043 / ATCC BAA-672</strain>
    </source>
</reference>